<evidence type="ECO:0000255" key="1">
    <source>
        <dbReference type="HAMAP-Rule" id="MF_00206"/>
    </source>
</evidence>
<evidence type="ECO:0000255" key="2">
    <source>
        <dbReference type="PROSITE-ProRule" id="PRU01266"/>
    </source>
</evidence>
<evidence type="ECO:0000256" key="3">
    <source>
        <dbReference type="SAM" id="MobiDB-lite"/>
    </source>
</evidence>
<protein>
    <recommendedName>
        <fullName evidence="1">Lipoyl synthase</fullName>
        <ecNumber evidence="1">2.8.1.8</ecNumber>
    </recommendedName>
    <alternativeName>
        <fullName evidence="1">Lip-syn</fullName>
        <shortName evidence="1">LS</shortName>
    </alternativeName>
    <alternativeName>
        <fullName evidence="1">Lipoate synthase</fullName>
    </alternativeName>
    <alternativeName>
        <fullName evidence="1">Lipoic acid synthase</fullName>
    </alternativeName>
    <alternativeName>
        <fullName evidence="1">Sulfur insertion protein LipA</fullName>
    </alternativeName>
</protein>
<comment type="function">
    <text evidence="1">Catalyzes the radical-mediated insertion of two sulfur atoms into the C-6 and C-8 positions of the octanoyl moiety bound to the lipoyl domains of lipoate-dependent enzymes, thereby converting the octanoylated domains into lipoylated derivatives.</text>
</comment>
<comment type="catalytic activity">
    <reaction evidence="1">
        <text>[[Fe-S] cluster scaffold protein carrying a second [4Fe-4S](2+) cluster] + N(6)-octanoyl-L-lysyl-[protein] + 2 oxidized [2Fe-2S]-[ferredoxin] + 2 S-adenosyl-L-methionine + 4 H(+) = [[Fe-S] cluster scaffold protein] + N(6)-[(R)-dihydrolipoyl]-L-lysyl-[protein] + 4 Fe(3+) + 2 hydrogen sulfide + 2 5'-deoxyadenosine + 2 L-methionine + 2 reduced [2Fe-2S]-[ferredoxin]</text>
        <dbReference type="Rhea" id="RHEA:16585"/>
        <dbReference type="Rhea" id="RHEA-COMP:9928"/>
        <dbReference type="Rhea" id="RHEA-COMP:10000"/>
        <dbReference type="Rhea" id="RHEA-COMP:10001"/>
        <dbReference type="Rhea" id="RHEA-COMP:10475"/>
        <dbReference type="Rhea" id="RHEA-COMP:14568"/>
        <dbReference type="Rhea" id="RHEA-COMP:14569"/>
        <dbReference type="ChEBI" id="CHEBI:15378"/>
        <dbReference type="ChEBI" id="CHEBI:17319"/>
        <dbReference type="ChEBI" id="CHEBI:29034"/>
        <dbReference type="ChEBI" id="CHEBI:29919"/>
        <dbReference type="ChEBI" id="CHEBI:33722"/>
        <dbReference type="ChEBI" id="CHEBI:33737"/>
        <dbReference type="ChEBI" id="CHEBI:33738"/>
        <dbReference type="ChEBI" id="CHEBI:57844"/>
        <dbReference type="ChEBI" id="CHEBI:59789"/>
        <dbReference type="ChEBI" id="CHEBI:78809"/>
        <dbReference type="ChEBI" id="CHEBI:83100"/>
        <dbReference type="EC" id="2.8.1.8"/>
    </reaction>
</comment>
<comment type="cofactor">
    <cofactor evidence="1">
        <name>[4Fe-4S] cluster</name>
        <dbReference type="ChEBI" id="CHEBI:49883"/>
    </cofactor>
    <text evidence="1">Binds 2 [4Fe-4S] clusters per subunit. One cluster is coordinated with 3 cysteines and an exchangeable S-adenosyl-L-methionine.</text>
</comment>
<comment type="pathway">
    <text evidence="1">Protein modification; protein lipoylation via endogenous pathway; protein N(6)-(lipoyl)lysine from octanoyl-[acyl-carrier-protein]: step 2/2.</text>
</comment>
<comment type="subcellular location">
    <subcellularLocation>
        <location evidence="1">Cytoplasm</location>
    </subcellularLocation>
</comment>
<comment type="similarity">
    <text evidence="1">Belongs to the radical SAM superfamily. Lipoyl synthase family.</text>
</comment>
<accession>A1B1T3</accession>
<sequence length="315" mass="34980">MADMPPVLRHPEKAHRPDQPQPKKPDWIRVKAPTSQGYKDTRDILRNNRLSTVCEEAGCPNVGECWSQGHATMMIMGEICTRGCSFCNVMTGKPNALDVFEPGRVAHAVQKLGLKHVVITSVDRDDLDDGGAEHFAQTIRAIRHRSPASTIEVLTPDFLKSKPGALEAVVEARPDVFNHNLETVPGLYPTVRPGARYFHSLRLLQQVKELDPGMFTKSGIMVGLGEDRQGILQVMDDMRAADVDFITIGQYLQPTPKHHRVDRFVTPEEFKGYEKAAYGKGFLMVSATPLTRSSYHAGDDFAQLRAARLAKLGRA</sequence>
<organism>
    <name type="scientific">Paracoccus denitrificans (strain Pd 1222)</name>
    <dbReference type="NCBI Taxonomy" id="318586"/>
    <lineage>
        <taxon>Bacteria</taxon>
        <taxon>Pseudomonadati</taxon>
        <taxon>Pseudomonadota</taxon>
        <taxon>Alphaproteobacteria</taxon>
        <taxon>Rhodobacterales</taxon>
        <taxon>Paracoccaceae</taxon>
        <taxon>Paracoccus</taxon>
    </lineage>
</organism>
<keyword id="KW-0004">4Fe-4S</keyword>
<keyword id="KW-0963">Cytoplasm</keyword>
<keyword id="KW-0408">Iron</keyword>
<keyword id="KW-0411">Iron-sulfur</keyword>
<keyword id="KW-0479">Metal-binding</keyword>
<keyword id="KW-1185">Reference proteome</keyword>
<keyword id="KW-0949">S-adenosyl-L-methionine</keyword>
<keyword id="KW-0808">Transferase</keyword>
<gene>
    <name evidence="1" type="primary">lipA</name>
    <name type="ordered locus">Pden_1376</name>
</gene>
<dbReference type="EC" id="2.8.1.8" evidence="1"/>
<dbReference type="EMBL" id="CP000489">
    <property type="protein sequence ID" value="ABL69477.1"/>
    <property type="molecule type" value="Genomic_DNA"/>
</dbReference>
<dbReference type="RefSeq" id="WP_011747695.1">
    <property type="nucleotide sequence ID" value="NC_008686.1"/>
</dbReference>
<dbReference type="SMR" id="A1B1T3"/>
<dbReference type="STRING" id="318586.Pden_1376"/>
<dbReference type="EnsemblBacteria" id="ABL69477">
    <property type="protein sequence ID" value="ABL69477"/>
    <property type="gene ID" value="Pden_1376"/>
</dbReference>
<dbReference type="KEGG" id="pde:Pden_1376"/>
<dbReference type="eggNOG" id="COG0320">
    <property type="taxonomic scope" value="Bacteria"/>
</dbReference>
<dbReference type="HOGENOM" id="CLU_033144_2_1_5"/>
<dbReference type="OrthoDB" id="9787898at2"/>
<dbReference type="UniPathway" id="UPA00538">
    <property type="reaction ID" value="UER00593"/>
</dbReference>
<dbReference type="Proteomes" id="UP000000361">
    <property type="component" value="Chromosome 1"/>
</dbReference>
<dbReference type="GO" id="GO:0005737">
    <property type="term" value="C:cytoplasm"/>
    <property type="evidence" value="ECO:0007669"/>
    <property type="project" value="UniProtKB-SubCell"/>
</dbReference>
<dbReference type="GO" id="GO:0051539">
    <property type="term" value="F:4 iron, 4 sulfur cluster binding"/>
    <property type="evidence" value="ECO:0007669"/>
    <property type="project" value="UniProtKB-UniRule"/>
</dbReference>
<dbReference type="GO" id="GO:0016992">
    <property type="term" value="F:lipoate synthase activity"/>
    <property type="evidence" value="ECO:0007669"/>
    <property type="project" value="UniProtKB-UniRule"/>
</dbReference>
<dbReference type="GO" id="GO:0046872">
    <property type="term" value="F:metal ion binding"/>
    <property type="evidence" value="ECO:0007669"/>
    <property type="project" value="UniProtKB-KW"/>
</dbReference>
<dbReference type="CDD" id="cd01335">
    <property type="entry name" value="Radical_SAM"/>
    <property type="match status" value="1"/>
</dbReference>
<dbReference type="FunFam" id="3.20.20.70:FF:000040">
    <property type="entry name" value="Lipoyl synthase"/>
    <property type="match status" value="1"/>
</dbReference>
<dbReference type="Gene3D" id="3.20.20.70">
    <property type="entry name" value="Aldolase class I"/>
    <property type="match status" value="1"/>
</dbReference>
<dbReference type="HAMAP" id="MF_00206">
    <property type="entry name" value="Lipoyl_synth"/>
    <property type="match status" value="1"/>
</dbReference>
<dbReference type="InterPro" id="IPR013785">
    <property type="entry name" value="Aldolase_TIM"/>
</dbReference>
<dbReference type="InterPro" id="IPR006638">
    <property type="entry name" value="Elp3/MiaA/NifB-like_rSAM"/>
</dbReference>
<dbReference type="InterPro" id="IPR031691">
    <property type="entry name" value="LIAS_N"/>
</dbReference>
<dbReference type="InterPro" id="IPR003698">
    <property type="entry name" value="Lipoyl_synth"/>
</dbReference>
<dbReference type="InterPro" id="IPR007197">
    <property type="entry name" value="rSAM"/>
</dbReference>
<dbReference type="NCBIfam" id="TIGR00510">
    <property type="entry name" value="lipA"/>
    <property type="match status" value="1"/>
</dbReference>
<dbReference type="NCBIfam" id="NF004019">
    <property type="entry name" value="PRK05481.1"/>
    <property type="match status" value="1"/>
</dbReference>
<dbReference type="NCBIfam" id="NF009544">
    <property type="entry name" value="PRK12928.1"/>
    <property type="match status" value="1"/>
</dbReference>
<dbReference type="PANTHER" id="PTHR10949">
    <property type="entry name" value="LIPOYL SYNTHASE"/>
    <property type="match status" value="1"/>
</dbReference>
<dbReference type="PANTHER" id="PTHR10949:SF0">
    <property type="entry name" value="LIPOYL SYNTHASE, MITOCHONDRIAL"/>
    <property type="match status" value="1"/>
</dbReference>
<dbReference type="Pfam" id="PF16881">
    <property type="entry name" value="LIAS_N"/>
    <property type="match status" value="1"/>
</dbReference>
<dbReference type="Pfam" id="PF04055">
    <property type="entry name" value="Radical_SAM"/>
    <property type="match status" value="1"/>
</dbReference>
<dbReference type="PIRSF" id="PIRSF005963">
    <property type="entry name" value="Lipoyl_synth"/>
    <property type="match status" value="1"/>
</dbReference>
<dbReference type="SFLD" id="SFLDF00271">
    <property type="entry name" value="lipoyl_synthase"/>
    <property type="match status" value="1"/>
</dbReference>
<dbReference type="SFLD" id="SFLDG01058">
    <property type="entry name" value="lipoyl_synthase_like"/>
    <property type="match status" value="1"/>
</dbReference>
<dbReference type="SMART" id="SM00729">
    <property type="entry name" value="Elp3"/>
    <property type="match status" value="1"/>
</dbReference>
<dbReference type="SUPFAM" id="SSF102114">
    <property type="entry name" value="Radical SAM enzymes"/>
    <property type="match status" value="1"/>
</dbReference>
<dbReference type="PROSITE" id="PS51918">
    <property type="entry name" value="RADICAL_SAM"/>
    <property type="match status" value="1"/>
</dbReference>
<feature type="chain" id="PRO_0000325283" description="Lipoyl synthase">
    <location>
        <begin position="1"/>
        <end position="315"/>
    </location>
</feature>
<feature type="domain" description="Radical SAM core" evidence="2">
    <location>
        <begin position="66"/>
        <end position="283"/>
    </location>
</feature>
<feature type="region of interest" description="Disordered" evidence="3">
    <location>
        <begin position="1"/>
        <end position="33"/>
    </location>
</feature>
<feature type="compositionally biased region" description="Basic and acidic residues" evidence="3">
    <location>
        <begin position="9"/>
        <end position="29"/>
    </location>
</feature>
<feature type="binding site" evidence="1">
    <location>
        <position position="54"/>
    </location>
    <ligand>
        <name>[4Fe-4S] cluster</name>
        <dbReference type="ChEBI" id="CHEBI:49883"/>
        <label>1</label>
    </ligand>
</feature>
<feature type="binding site" evidence="1">
    <location>
        <position position="59"/>
    </location>
    <ligand>
        <name>[4Fe-4S] cluster</name>
        <dbReference type="ChEBI" id="CHEBI:49883"/>
        <label>1</label>
    </ligand>
</feature>
<feature type="binding site" evidence="1">
    <location>
        <position position="65"/>
    </location>
    <ligand>
        <name>[4Fe-4S] cluster</name>
        <dbReference type="ChEBI" id="CHEBI:49883"/>
        <label>1</label>
    </ligand>
</feature>
<feature type="binding site" evidence="1">
    <location>
        <position position="80"/>
    </location>
    <ligand>
        <name>[4Fe-4S] cluster</name>
        <dbReference type="ChEBI" id="CHEBI:49883"/>
        <label>2</label>
        <note>4Fe-4S-S-AdoMet</note>
    </ligand>
</feature>
<feature type="binding site" evidence="1">
    <location>
        <position position="84"/>
    </location>
    <ligand>
        <name>[4Fe-4S] cluster</name>
        <dbReference type="ChEBI" id="CHEBI:49883"/>
        <label>2</label>
        <note>4Fe-4S-S-AdoMet</note>
    </ligand>
</feature>
<feature type="binding site" evidence="1">
    <location>
        <position position="87"/>
    </location>
    <ligand>
        <name>[4Fe-4S] cluster</name>
        <dbReference type="ChEBI" id="CHEBI:49883"/>
        <label>2</label>
        <note>4Fe-4S-S-AdoMet</note>
    </ligand>
</feature>
<feature type="binding site" evidence="1">
    <location>
        <position position="294"/>
    </location>
    <ligand>
        <name>[4Fe-4S] cluster</name>
        <dbReference type="ChEBI" id="CHEBI:49883"/>
        <label>1</label>
    </ligand>
</feature>
<proteinExistence type="inferred from homology"/>
<reference key="1">
    <citation type="submission" date="2006-12" db="EMBL/GenBank/DDBJ databases">
        <title>Complete sequence of chromosome 1 of Paracoccus denitrificans PD1222.</title>
        <authorList>
            <person name="Copeland A."/>
            <person name="Lucas S."/>
            <person name="Lapidus A."/>
            <person name="Barry K."/>
            <person name="Detter J.C."/>
            <person name="Glavina del Rio T."/>
            <person name="Hammon N."/>
            <person name="Israni S."/>
            <person name="Dalin E."/>
            <person name="Tice H."/>
            <person name="Pitluck S."/>
            <person name="Munk A.C."/>
            <person name="Brettin T."/>
            <person name="Bruce D."/>
            <person name="Han C."/>
            <person name="Tapia R."/>
            <person name="Gilna P."/>
            <person name="Schmutz J."/>
            <person name="Larimer F."/>
            <person name="Land M."/>
            <person name="Hauser L."/>
            <person name="Kyrpides N."/>
            <person name="Lykidis A."/>
            <person name="Spiro S."/>
            <person name="Richardson D.J."/>
            <person name="Moir J.W.B."/>
            <person name="Ferguson S.J."/>
            <person name="van Spanning R.J.M."/>
            <person name="Richardson P."/>
        </authorList>
    </citation>
    <scope>NUCLEOTIDE SEQUENCE [LARGE SCALE GENOMIC DNA]</scope>
    <source>
        <strain>Pd 1222</strain>
    </source>
</reference>
<name>LIPA_PARDP</name>